<organism>
    <name type="scientific">Escherichia coli O6:H1 (strain CFT073 / ATCC 700928 / UPEC)</name>
    <dbReference type="NCBI Taxonomy" id="199310"/>
    <lineage>
        <taxon>Bacteria</taxon>
        <taxon>Pseudomonadati</taxon>
        <taxon>Pseudomonadota</taxon>
        <taxon>Gammaproteobacteria</taxon>
        <taxon>Enterobacterales</taxon>
        <taxon>Enterobacteriaceae</taxon>
        <taxon>Escherichia</taxon>
    </lineage>
</organism>
<proteinExistence type="inferred from homology"/>
<gene>
    <name type="primary">ygdQ</name>
    <name type="ordered locus">c3427</name>
</gene>
<keyword id="KW-0997">Cell inner membrane</keyword>
<keyword id="KW-1003">Cell membrane</keyword>
<keyword id="KW-0472">Membrane</keyword>
<keyword id="KW-1185">Reference proteome</keyword>
<keyword id="KW-0812">Transmembrane</keyword>
<keyword id="KW-1133">Transmembrane helix</keyword>
<comment type="subcellular location">
    <subcellularLocation>
        <location evidence="1">Cell inner membrane</location>
        <topology evidence="1">Multi-pass membrane protein</topology>
    </subcellularLocation>
</comment>
<comment type="similarity">
    <text evidence="3">Belongs to the UPF0053 family.</text>
</comment>
<sequence>MLFAWITDPNAWLALGTLTLLEIVLGIDNIIFLSLVVAKLPTAQRAHARRLGLAGAMVMRLALLASIAWVTRLTNPLFTIFSQEISARDLILLLGGLFLIWKASKEIHESIEGEEEGLKTRVSSFLGAIVQIMLLDIIFSLDSVITAVGLSDHLFIMMAAVVIAVGVMMFAARSIGDFVERHPSVKMLALSFLILVGFTLILESFDIHVPKGYIYFAMFFSIAVESLNLIRNKKNPL</sequence>
<evidence type="ECO:0000250" key="1"/>
<evidence type="ECO:0000255" key="2"/>
<evidence type="ECO:0000305" key="3"/>
<accession>P67128</accession>
<accession>Q46931</accession>
<feature type="chain" id="PRO_0000088367" description="UPF0053 inner membrane protein YgdQ">
    <location>
        <begin position="1"/>
        <end position="237"/>
    </location>
</feature>
<feature type="topological domain" description="Periplasmic" evidence="2">
    <location>
        <begin position="1"/>
        <end position="17"/>
    </location>
</feature>
<feature type="transmembrane region" description="Helical" evidence="2">
    <location>
        <begin position="18"/>
        <end position="38"/>
    </location>
</feature>
<feature type="topological domain" description="Cytoplasmic" evidence="2">
    <location>
        <begin position="39"/>
        <end position="50"/>
    </location>
</feature>
<feature type="transmembrane region" description="Helical" evidence="2">
    <location>
        <begin position="51"/>
        <end position="71"/>
    </location>
</feature>
<feature type="topological domain" description="Periplasmic" evidence="2">
    <location>
        <begin position="72"/>
        <end position="79"/>
    </location>
</feature>
<feature type="transmembrane region" description="Helical" evidence="2">
    <location>
        <begin position="80"/>
        <end position="100"/>
    </location>
</feature>
<feature type="topological domain" description="Cytoplasmic" evidence="2">
    <location>
        <begin position="101"/>
        <end position="124"/>
    </location>
</feature>
<feature type="transmembrane region" description="Helical" evidence="2">
    <location>
        <begin position="125"/>
        <end position="145"/>
    </location>
</feature>
<feature type="topological domain" description="Periplasmic" evidence="2">
    <location>
        <begin position="146"/>
        <end position="151"/>
    </location>
</feature>
<feature type="transmembrane region" description="Helical" evidence="2">
    <location>
        <begin position="152"/>
        <end position="172"/>
    </location>
</feature>
<feature type="topological domain" description="Cytoplasmic" evidence="2">
    <location>
        <begin position="173"/>
        <end position="186"/>
    </location>
</feature>
<feature type="transmembrane region" description="Helical" evidence="2">
    <location>
        <begin position="187"/>
        <end position="207"/>
    </location>
</feature>
<feature type="topological domain" description="Periplasmic" evidence="2">
    <location>
        <begin position="208"/>
        <end position="209"/>
    </location>
</feature>
<feature type="transmembrane region" description="Helical" evidence="2">
    <location>
        <begin position="210"/>
        <end position="230"/>
    </location>
</feature>
<feature type="topological domain" description="Cytoplasmic" evidence="2">
    <location>
        <begin position="231"/>
        <end position="237"/>
    </location>
</feature>
<name>YGDQ_ECOL6</name>
<dbReference type="EMBL" id="AE014075">
    <property type="protein sequence ID" value="AAN81872.1"/>
    <property type="molecule type" value="Genomic_DNA"/>
</dbReference>
<dbReference type="RefSeq" id="WP_000895624.1">
    <property type="nucleotide sequence ID" value="NZ_CP051263.1"/>
</dbReference>
<dbReference type="STRING" id="199310.c3427"/>
<dbReference type="KEGG" id="ecc:c3427"/>
<dbReference type="eggNOG" id="COG0861">
    <property type="taxonomic scope" value="Bacteria"/>
</dbReference>
<dbReference type="HOGENOM" id="CLU_064910_0_0_6"/>
<dbReference type="BioCyc" id="ECOL199310:C3427-MONOMER"/>
<dbReference type="Proteomes" id="UP000001410">
    <property type="component" value="Chromosome"/>
</dbReference>
<dbReference type="GO" id="GO:0005886">
    <property type="term" value="C:plasma membrane"/>
    <property type="evidence" value="ECO:0007669"/>
    <property type="project" value="UniProtKB-SubCell"/>
</dbReference>
<dbReference type="InterPro" id="IPR005496">
    <property type="entry name" value="Integral_membrane_TerC"/>
</dbReference>
<dbReference type="PANTHER" id="PTHR30060:SF0">
    <property type="entry name" value="COILED-COIL PROTEIN (DUF2040)-RELATED"/>
    <property type="match status" value="1"/>
</dbReference>
<dbReference type="PANTHER" id="PTHR30060">
    <property type="entry name" value="INNER MEMBRANE PROTEIN"/>
    <property type="match status" value="1"/>
</dbReference>
<dbReference type="Pfam" id="PF03741">
    <property type="entry name" value="TerC"/>
    <property type="match status" value="1"/>
</dbReference>
<protein>
    <recommendedName>
        <fullName>UPF0053 inner membrane protein YgdQ</fullName>
    </recommendedName>
</protein>
<reference key="1">
    <citation type="journal article" date="2002" name="Proc. Natl. Acad. Sci. U.S.A.">
        <title>Extensive mosaic structure revealed by the complete genome sequence of uropathogenic Escherichia coli.</title>
        <authorList>
            <person name="Welch R.A."/>
            <person name="Burland V."/>
            <person name="Plunkett G. III"/>
            <person name="Redford P."/>
            <person name="Roesch P."/>
            <person name="Rasko D."/>
            <person name="Buckles E.L."/>
            <person name="Liou S.-R."/>
            <person name="Boutin A."/>
            <person name="Hackett J."/>
            <person name="Stroud D."/>
            <person name="Mayhew G.F."/>
            <person name="Rose D.J."/>
            <person name="Zhou S."/>
            <person name="Schwartz D.C."/>
            <person name="Perna N.T."/>
            <person name="Mobley H.L.T."/>
            <person name="Donnenberg M.S."/>
            <person name="Blattner F.R."/>
        </authorList>
    </citation>
    <scope>NUCLEOTIDE SEQUENCE [LARGE SCALE GENOMIC DNA]</scope>
    <source>
        <strain>CFT073 / ATCC 700928 / UPEC</strain>
    </source>
</reference>